<feature type="chain" id="PRO_0000386069" description="GTPase Obg">
    <location>
        <begin position="1"/>
        <end position="434"/>
    </location>
</feature>
<feature type="domain" description="Obg" evidence="3">
    <location>
        <begin position="1"/>
        <end position="159"/>
    </location>
</feature>
<feature type="domain" description="OBG-type G" evidence="1">
    <location>
        <begin position="160"/>
        <end position="329"/>
    </location>
</feature>
<feature type="domain" description="OCT" evidence="2">
    <location>
        <begin position="356"/>
        <end position="434"/>
    </location>
</feature>
<feature type="binding site" evidence="1">
    <location>
        <begin position="166"/>
        <end position="173"/>
    </location>
    <ligand>
        <name>GTP</name>
        <dbReference type="ChEBI" id="CHEBI:37565"/>
    </ligand>
</feature>
<feature type="binding site" evidence="1">
    <location>
        <position position="173"/>
    </location>
    <ligand>
        <name>Mg(2+)</name>
        <dbReference type="ChEBI" id="CHEBI:18420"/>
    </ligand>
</feature>
<feature type="binding site" evidence="1">
    <location>
        <begin position="191"/>
        <end position="195"/>
    </location>
    <ligand>
        <name>GTP</name>
        <dbReference type="ChEBI" id="CHEBI:37565"/>
    </ligand>
</feature>
<feature type="binding site" evidence="1">
    <location>
        <position position="193"/>
    </location>
    <ligand>
        <name>Mg(2+)</name>
        <dbReference type="ChEBI" id="CHEBI:18420"/>
    </ligand>
</feature>
<feature type="binding site" evidence="1">
    <location>
        <begin position="212"/>
        <end position="215"/>
    </location>
    <ligand>
        <name>GTP</name>
        <dbReference type="ChEBI" id="CHEBI:37565"/>
    </ligand>
</feature>
<feature type="binding site" evidence="1">
    <location>
        <begin position="282"/>
        <end position="285"/>
    </location>
    <ligand>
        <name>GTP</name>
        <dbReference type="ChEBI" id="CHEBI:37565"/>
    </ligand>
</feature>
<feature type="binding site" evidence="1">
    <location>
        <begin position="310"/>
        <end position="312"/>
    </location>
    <ligand>
        <name>GTP</name>
        <dbReference type="ChEBI" id="CHEBI:37565"/>
    </ligand>
</feature>
<keyword id="KW-0963">Cytoplasm</keyword>
<keyword id="KW-0342">GTP-binding</keyword>
<keyword id="KW-0378">Hydrolase</keyword>
<keyword id="KW-0460">Magnesium</keyword>
<keyword id="KW-0479">Metal-binding</keyword>
<keyword id="KW-0547">Nucleotide-binding</keyword>
<keyword id="KW-1185">Reference proteome</keyword>
<evidence type="ECO:0000255" key="1">
    <source>
        <dbReference type="HAMAP-Rule" id="MF_01454"/>
    </source>
</evidence>
<evidence type="ECO:0000255" key="2">
    <source>
        <dbReference type="PROSITE-ProRule" id="PRU01229"/>
    </source>
</evidence>
<evidence type="ECO:0000255" key="3">
    <source>
        <dbReference type="PROSITE-ProRule" id="PRU01231"/>
    </source>
</evidence>
<comment type="function">
    <text evidence="1">An essential GTPase which binds GTP, GDP and possibly (p)ppGpp with moderate affinity, with high nucleotide exchange rates and a fairly low GTP hydrolysis rate. Plays a role in control of the cell cycle, stress response, ribosome biogenesis and in those bacteria that undergo differentiation, in morphogenesis control.</text>
</comment>
<comment type="cofactor">
    <cofactor evidence="1">
        <name>Mg(2+)</name>
        <dbReference type="ChEBI" id="CHEBI:18420"/>
    </cofactor>
</comment>
<comment type="subunit">
    <text evidence="1">Monomer.</text>
</comment>
<comment type="subcellular location">
    <subcellularLocation>
        <location evidence="1">Cytoplasm</location>
    </subcellularLocation>
</comment>
<comment type="similarity">
    <text evidence="1">Belongs to the TRAFAC class OBG-HflX-like GTPase superfamily. OBG GTPase family.</text>
</comment>
<gene>
    <name evidence="1" type="primary">obg</name>
    <name type="ordered locus">MYCGA4500</name>
    <name type="ORF">MGA_0110</name>
</gene>
<reference key="1">
    <citation type="journal article" date="2003" name="Microbiology">
        <title>The complete genome sequence of the avian pathogen Mycoplasma gallisepticum strain R(low).</title>
        <authorList>
            <person name="Papazisi L."/>
            <person name="Gorton T.S."/>
            <person name="Kutish G."/>
            <person name="Markham P.F."/>
            <person name="Browning G.F."/>
            <person name="Nguyen D.K."/>
            <person name="Swartzell S."/>
            <person name="Madan A."/>
            <person name="Mahairas G."/>
            <person name="Geary S.J."/>
        </authorList>
    </citation>
    <scope>NUCLEOTIDE SEQUENCE [LARGE SCALE GENOMIC DNA]</scope>
    <source>
        <strain>R(low / passage 15 / clone 2)</strain>
    </source>
</reference>
<sequence length="434" mass="48177">MQFIDRCQIKLIAGNGGDGIIAWRREAHYDKGGPAGGSGGKGGNIILVADHNQSTLLSLKYSKIIRASNGDNGKPDLSSGQNGMDKYVKVPIGTTVYDEQTNEVIVDLIRDKQEYIICHGGKGGRGNAAFKSSTLRAPNLYELGDEGEEKTVRLELKYLANVGIVGYPNAGKSTLISKLSNAKPKIANYQFTTLVPILGIVENNDKRLVFADIPGLIENASEGYGLGHDFLRHVERCEVLIHLISMNPLDHDDVIDAYEKIMTELRKYSQLLVNKKMLVVANKMDVEGASENFNKLRSYLAKKGIDISSISAINGDVNNLVDRVFDLYQKTLSTTTETNPFSIPMVAEKVYYYDGEKTIDDDPLDVIKDGENRWIVSSKKLTYWFKKIPQTTLDNITRLGQKIKSLGVEDQLKKMGAKPNDVIVICDYEYLIDE</sequence>
<accession>Q7NB30</accession>
<name>OBG_MYCGA</name>
<dbReference type="EC" id="3.6.5.-" evidence="1"/>
<dbReference type="EMBL" id="AE015450">
    <property type="protein sequence ID" value="AAP56800.2"/>
    <property type="molecule type" value="Genomic_DNA"/>
</dbReference>
<dbReference type="SMR" id="Q7NB30"/>
<dbReference type="KEGG" id="mga:MGA_0110"/>
<dbReference type="PATRIC" id="fig|233150.7.peg.508"/>
<dbReference type="HOGENOM" id="CLU_011747_2_1_14"/>
<dbReference type="OrthoDB" id="9807318at2"/>
<dbReference type="Proteomes" id="UP000001418">
    <property type="component" value="Chromosome"/>
</dbReference>
<dbReference type="GO" id="GO:0005737">
    <property type="term" value="C:cytoplasm"/>
    <property type="evidence" value="ECO:0007669"/>
    <property type="project" value="UniProtKB-SubCell"/>
</dbReference>
<dbReference type="GO" id="GO:0005525">
    <property type="term" value="F:GTP binding"/>
    <property type="evidence" value="ECO:0007669"/>
    <property type="project" value="UniProtKB-UniRule"/>
</dbReference>
<dbReference type="GO" id="GO:0003924">
    <property type="term" value="F:GTPase activity"/>
    <property type="evidence" value="ECO:0007669"/>
    <property type="project" value="UniProtKB-UniRule"/>
</dbReference>
<dbReference type="GO" id="GO:0000287">
    <property type="term" value="F:magnesium ion binding"/>
    <property type="evidence" value="ECO:0007669"/>
    <property type="project" value="InterPro"/>
</dbReference>
<dbReference type="GO" id="GO:0042254">
    <property type="term" value="P:ribosome biogenesis"/>
    <property type="evidence" value="ECO:0007669"/>
    <property type="project" value="UniProtKB-UniRule"/>
</dbReference>
<dbReference type="CDD" id="cd01898">
    <property type="entry name" value="Obg"/>
    <property type="match status" value="1"/>
</dbReference>
<dbReference type="FunFam" id="2.70.210.12:FF:000001">
    <property type="entry name" value="GTPase Obg"/>
    <property type="match status" value="1"/>
</dbReference>
<dbReference type="Gene3D" id="3.30.300.350">
    <property type="entry name" value="GTP-binding protein OBG, C-terminal domain"/>
    <property type="match status" value="1"/>
</dbReference>
<dbReference type="Gene3D" id="2.70.210.12">
    <property type="entry name" value="GTP1/OBG domain"/>
    <property type="match status" value="1"/>
</dbReference>
<dbReference type="Gene3D" id="3.40.50.300">
    <property type="entry name" value="P-loop containing nucleotide triphosphate hydrolases"/>
    <property type="match status" value="1"/>
</dbReference>
<dbReference type="HAMAP" id="MF_01454">
    <property type="entry name" value="GTPase_Obg"/>
    <property type="match status" value="1"/>
</dbReference>
<dbReference type="InterPro" id="IPR031167">
    <property type="entry name" value="G_OBG"/>
</dbReference>
<dbReference type="InterPro" id="IPR006073">
    <property type="entry name" value="GTP-bd"/>
</dbReference>
<dbReference type="InterPro" id="IPR014100">
    <property type="entry name" value="GTP-bd_Obg/CgtA"/>
</dbReference>
<dbReference type="InterPro" id="IPR036346">
    <property type="entry name" value="GTP-bd_prot_GTP1/OBG_C_sf"/>
</dbReference>
<dbReference type="InterPro" id="IPR006074">
    <property type="entry name" value="GTP1-OBG_CS"/>
</dbReference>
<dbReference type="InterPro" id="IPR006169">
    <property type="entry name" value="GTP1_OBG_dom"/>
</dbReference>
<dbReference type="InterPro" id="IPR036726">
    <property type="entry name" value="GTP1_OBG_dom_sf"/>
</dbReference>
<dbReference type="InterPro" id="IPR045086">
    <property type="entry name" value="OBG_GTPase"/>
</dbReference>
<dbReference type="InterPro" id="IPR015349">
    <property type="entry name" value="OCT_dom"/>
</dbReference>
<dbReference type="InterPro" id="IPR027417">
    <property type="entry name" value="P-loop_NTPase"/>
</dbReference>
<dbReference type="InterPro" id="IPR005225">
    <property type="entry name" value="Small_GTP-bd"/>
</dbReference>
<dbReference type="NCBIfam" id="TIGR02729">
    <property type="entry name" value="Obg_CgtA"/>
    <property type="match status" value="1"/>
</dbReference>
<dbReference type="NCBIfam" id="TIGR03595">
    <property type="entry name" value="Obg_CgtA_exten"/>
    <property type="match status" value="1"/>
</dbReference>
<dbReference type="NCBIfam" id="NF008955">
    <property type="entry name" value="PRK12297.1"/>
    <property type="match status" value="1"/>
</dbReference>
<dbReference type="NCBIfam" id="NF008956">
    <property type="entry name" value="PRK12299.1"/>
    <property type="match status" value="1"/>
</dbReference>
<dbReference type="NCBIfam" id="TIGR00231">
    <property type="entry name" value="small_GTP"/>
    <property type="match status" value="1"/>
</dbReference>
<dbReference type="PANTHER" id="PTHR11702">
    <property type="entry name" value="DEVELOPMENTALLY REGULATED GTP-BINDING PROTEIN-RELATED"/>
    <property type="match status" value="1"/>
</dbReference>
<dbReference type="PANTHER" id="PTHR11702:SF31">
    <property type="entry name" value="MITOCHONDRIAL RIBOSOME-ASSOCIATED GTPASE 2"/>
    <property type="match status" value="1"/>
</dbReference>
<dbReference type="Pfam" id="PF09269">
    <property type="entry name" value="DUF1967"/>
    <property type="match status" value="1"/>
</dbReference>
<dbReference type="Pfam" id="PF01018">
    <property type="entry name" value="GTP1_OBG"/>
    <property type="match status" value="1"/>
</dbReference>
<dbReference type="Pfam" id="PF01926">
    <property type="entry name" value="MMR_HSR1"/>
    <property type="match status" value="1"/>
</dbReference>
<dbReference type="PRINTS" id="PR00326">
    <property type="entry name" value="GTP1OBG"/>
</dbReference>
<dbReference type="SUPFAM" id="SSF102741">
    <property type="entry name" value="Obg GTP-binding protein C-terminal domain"/>
    <property type="match status" value="1"/>
</dbReference>
<dbReference type="SUPFAM" id="SSF82051">
    <property type="entry name" value="Obg GTP-binding protein N-terminal domain"/>
    <property type="match status" value="1"/>
</dbReference>
<dbReference type="SUPFAM" id="SSF52540">
    <property type="entry name" value="P-loop containing nucleoside triphosphate hydrolases"/>
    <property type="match status" value="1"/>
</dbReference>
<dbReference type="PROSITE" id="PS51710">
    <property type="entry name" value="G_OBG"/>
    <property type="match status" value="1"/>
</dbReference>
<dbReference type="PROSITE" id="PS00905">
    <property type="entry name" value="GTP1_OBG"/>
    <property type="match status" value="1"/>
</dbReference>
<dbReference type="PROSITE" id="PS51883">
    <property type="entry name" value="OBG"/>
    <property type="match status" value="1"/>
</dbReference>
<dbReference type="PROSITE" id="PS51881">
    <property type="entry name" value="OCT"/>
    <property type="match status" value="1"/>
</dbReference>
<protein>
    <recommendedName>
        <fullName evidence="1">GTPase Obg</fullName>
        <ecNumber evidence="1">3.6.5.-</ecNumber>
    </recommendedName>
    <alternativeName>
        <fullName evidence="1">GTP-binding protein Obg</fullName>
    </alternativeName>
</protein>
<proteinExistence type="inferred from homology"/>
<organism>
    <name type="scientific">Mycoplasmoides gallisepticum (strain R(low / passage 15 / clone 2))</name>
    <name type="common">Mycoplasma gallisepticum</name>
    <dbReference type="NCBI Taxonomy" id="710127"/>
    <lineage>
        <taxon>Bacteria</taxon>
        <taxon>Bacillati</taxon>
        <taxon>Mycoplasmatota</taxon>
        <taxon>Mycoplasmoidales</taxon>
        <taxon>Mycoplasmoidaceae</taxon>
        <taxon>Mycoplasmoides</taxon>
    </lineage>
</organism>